<name>DAPH_STRZT</name>
<protein>
    <recommendedName>
        <fullName evidence="1">2,3,4,5-tetrahydropyridine-2,6-dicarboxylate N-acetyltransferase</fullName>
        <ecNumber evidence="1">2.3.1.89</ecNumber>
    </recommendedName>
    <alternativeName>
        <fullName evidence="1">Tetrahydrodipicolinate N-acetyltransferase</fullName>
        <shortName evidence="1">THP acetyltransferase</shortName>
        <shortName evidence="1">Tetrahydropicolinate acetylase</shortName>
    </alternativeName>
</protein>
<feature type="chain" id="PRO_1000187455" description="2,3,4,5-tetrahydropyridine-2,6-dicarboxylate N-acetyltransferase">
    <location>
        <begin position="1"/>
        <end position="232"/>
    </location>
</feature>
<proteinExistence type="inferred from homology"/>
<sequence>MTATKMNAQEIIQFIANAEKKTSVKVTFEGQLATAVPSSVVKLGNVLFGDWKDVAPLLEGLVENQDYVVEQDARNSAVPLLDKRAINARIEPGAIIRDQVKIGDNAVIMMGAVINIGAEIGAGTMIDMGAILGGRAIVGKNSHVGAGAVLAGVIEPVSAEPVRVGDNVLIGANAVVIEGVQIGSGSVVAAGAIVTQDVPENVVVAGVPARIIKEIDAQTQQKTALEDALRTL</sequence>
<reference key="1">
    <citation type="journal article" date="2010" name="Genome Biol.">
        <title>Structure and dynamics of the pan-genome of Streptococcus pneumoniae and closely related species.</title>
        <authorList>
            <person name="Donati C."/>
            <person name="Hiller N.L."/>
            <person name="Tettelin H."/>
            <person name="Muzzi A."/>
            <person name="Croucher N.J."/>
            <person name="Angiuoli S.V."/>
            <person name="Oggioni M."/>
            <person name="Dunning Hotopp J.C."/>
            <person name="Hu F.Z."/>
            <person name="Riley D.R."/>
            <person name="Covacci A."/>
            <person name="Mitchell T.J."/>
            <person name="Bentley S.D."/>
            <person name="Kilian M."/>
            <person name="Ehrlich G.D."/>
            <person name="Rappuoli R."/>
            <person name="Moxon E.R."/>
            <person name="Masignani V."/>
        </authorList>
    </citation>
    <scope>NUCLEOTIDE SEQUENCE [LARGE SCALE GENOMIC DNA]</scope>
    <source>
        <strain>Taiwan19F-14</strain>
    </source>
</reference>
<comment type="function">
    <text evidence="1">Catalyzes the transfer of an acetyl group from acetyl-CoA to tetrahydrodipicolinate.</text>
</comment>
<comment type="catalytic activity">
    <reaction evidence="1">
        <text>(S)-2,3,4,5-tetrahydrodipicolinate + acetyl-CoA + H2O = L-2-acetamido-6-oxoheptanedioate + CoA</text>
        <dbReference type="Rhea" id="RHEA:13085"/>
        <dbReference type="ChEBI" id="CHEBI:15377"/>
        <dbReference type="ChEBI" id="CHEBI:16845"/>
        <dbReference type="ChEBI" id="CHEBI:57287"/>
        <dbReference type="ChEBI" id="CHEBI:57288"/>
        <dbReference type="ChEBI" id="CHEBI:58117"/>
        <dbReference type="EC" id="2.3.1.89"/>
    </reaction>
</comment>
<comment type="pathway">
    <text evidence="1">Amino-acid biosynthesis; L-lysine biosynthesis via DAP pathway; LL-2,6-diaminopimelate from (S)-tetrahydrodipicolinate (acetylase route): step 1/3.</text>
</comment>
<comment type="similarity">
    <text evidence="1">Belongs to the transferase hexapeptide repeat family. DapH subfamily.</text>
</comment>
<accession>C1CU00</accession>
<dbReference type="EC" id="2.3.1.89" evidence="1"/>
<dbReference type="EMBL" id="CP000921">
    <property type="protein sequence ID" value="ACO22792.1"/>
    <property type="molecule type" value="Genomic_DNA"/>
</dbReference>
<dbReference type="SMR" id="C1CU00"/>
<dbReference type="KEGG" id="snt:SPT_2106"/>
<dbReference type="HOGENOM" id="CLU_103751_0_0_9"/>
<dbReference type="UniPathway" id="UPA00034">
    <property type="reaction ID" value="UER00022"/>
</dbReference>
<dbReference type="GO" id="GO:0047200">
    <property type="term" value="F:tetrahydrodipicolinate N-acetyltransferase activity"/>
    <property type="evidence" value="ECO:0007669"/>
    <property type="project" value="UniProtKB-EC"/>
</dbReference>
<dbReference type="GO" id="GO:0019877">
    <property type="term" value="P:diaminopimelate biosynthetic process"/>
    <property type="evidence" value="ECO:0007669"/>
    <property type="project" value="UniProtKB-UniRule"/>
</dbReference>
<dbReference type="GO" id="GO:0009089">
    <property type="term" value="P:lysine biosynthetic process via diaminopimelate"/>
    <property type="evidence" value="ECO:0007669"/>
    <property type="project" value="UniProtKB-UniRule"/>
</dbReference>
<dbReference type="Gene3D" id="2.160.10.10">
    <property type="entry name" value="Hexapeptide repeat proteins"/>
    <property type="match status" value="1"/>
</dbReference>
<dbReference type="Gene3D" id="3.30.70.250">
    <property type="entry name" value="Malonyl-CoA ACP transacylase, ACP-binding"/>
    <property type="match status" value="1"/>
</dbReference>
<dbReference type="HAMAP" id="MF_01691">
    <property type="entry name" value="DapH"/>
    <property type="match status" value="1"/>
</dbReference>
<dbReference type="InterPro" id="IPR019873">
    <property type="entry name" value="DapH"/>
</dbReference>
<dbReference type="InterPro" id="IPR013710">
    <property type="entry name" value="DapH_N"/>
</dbReference>
<dbReference type="InterPro" id="IPR001451">
    <property type="entry name" value="Hexapep"/>
</dbReference>
<dbReference type="InterPro" id="IPR018357">
    <property type="entry name" value="Hexapep_transf_CS"/>
</dbReference>
<dbReference type="InterPro" id="IPR050179">
    <property type="entry name" value="Trans_hexapeptide_repeat"/>
</dbReference>
<dbReference type="InterPro" id="IPR011004">
    <property type="entry name" value="Trimer_LpxA-like_sf"/>
</dbReference>
<dbReference type="NCBIfam" id="TIGR03532">
    <property type="entry name" value="DapD_Ac"/>
    <property type="match status" value="1"/>
</dbReference>
<dbReference type="PANTHER" id="PTHR43300:SF10">
    <property type="entry name" value="2,3,4,5-TETRAHYDROPYRIDINE-2,6-DICARBOXYLATE N-ACETYLTRANSFERASE"/>
    <property type="match status" value="1"/>
</dbReference>
<dbReference type="PANTHER" id="PTHR43300">
    <property type="entry name" value="ACETYLTRANSFERASE"/>
    <property type="match status" value="1"/>
</dbReference>
<dbReference type="Pfam" id="PF08503">
    <property type="entry name" value="DapH_N"/>
    <property type="match status" value="1"/>
</dbReference>
<dbReference type="Pfam" id="PF00132">
    <property type="entry name" value="Hexapep"/>
    <property type="match status" value="1"/>
</dbReference>
<dbReference type="Pfam" id="PF14602">
    <property type="entry name" value="Hexapep_2"/>
    <property type="match status" value="2"/>
</dbReference>
<dbReference type="SUPFAM" id="SSF51161">
    <property type="entry name" value="Trimeric LpxA-like enzymes"/>
    <property type="match status" value="1"/>
</dbReference>
<dbReference type="PROSITE" id="PS00101">
    <property type="entry name" value="HEXAPEP_TRANSFERASES"/>
    <property type="match status" value="2"/>
</dbReference>
<gene>
    <name evidence="1" type="primary">dapH</name>
    <name type="ordered locus">SPT_2106</name>
</gene>
<organism>
    <name type="scientific">Streptococcus pneumoniae (strain Taiwan19F-14)</name>
    <dbReference type="NCBI Taxonomy" id="487213"/>
    <lineage>
        <taxon>Bacteria</taxon>
        <taxon>Bacillati</taxon>
        <taxon>Bacillota</taxon>
        <taxon>Bacilli</taxon>
        <taxon>Lactobacillales</taxon>
        <taxon>Streptococcaceae</taxon>
        <taxon>Streptococcus</taxon>
    </lineage>
</organism>
<evidence type="ECO:0000255" key="1">
    <source>
        <dbReference type="HAMAP-Rule" id="MF_01691"/>
    </source>
</evidence>
<keyword id="KW-0012">Acyltransferase</keyword>
<keyword id="KW-0028">Amino-acid biosynthesis</keyword>
<keyword id="KW-0220">Diaminopimelate biosynthesis</keyword>
<keyword id="KW-0457">Lysine biosynthesis</keyword>
<keyword id="KW-0677">Repeat</keyword>
<keyword id="KW-0808">Transferase</keyword>